<reference key="1">
    <citation type="journal article" date="2009" name="Genome Res.">
        <title>Newly introduced genomic prophage islands are critical determinants of in vivo competitiveness in the Liverpool epidemic strain of Pseudomonas aeruginosa.</title>
        <authorList>
            <person name="Winstanley C."/>
            <person name="Langille M.G.I."/>
            <person name="Fothergill J.L."/>
            <person name="Kukavica-Ibrulj I."/>
            <person name="Paradis-Bleau C."/>
            <person name="Sanschagrin F."/>
            <person name="Thomson N.R."/>
            <person name="Winsor G.L."/>
            <person name="Quail M.A."/>
            <person name="Lennard N."/>
            <person name="Bignell A."/>
            <person name="Clarke L."/>
            <person name="Seeger K."/>
            <person name="Saunders D."/>
            <person name="Harris D."/>
            <person name="Parkhill J."/>
            <person name="Hancock R.E.W."/>
            <person name="Brinkman F.S.L."/>
            <person name="Levesque R.C."/>
        </authorList>
    </citation>
    <scope>NUCLEOTIDE SEQUENCE [LARGE SCALE GENOMIC DNA]</scope>
    <source>
        <strain>LESB58</strain>
    </source>
</reference>
<keyword id="KW-0028">Amino-acid biosynthesis</keyword>
<keyword id="KW-0479">Metal-binding</keyword>
<keyword id="KW-0486">Methionine biosynthesis</keyword>
<keyword id="KW-0489">Methyltransferase</keyword>
<keyword id="KW-0677">Repeat</keyword>
<keyword id="KW-0808">Transferase</keyword>
<keyword id="KW-0862">Zinc</keyword>
<dbReference type="EC" id="2.1.1.14" evidence="1"/>
<dbReference type="EMBL" id="FM209186">
    <property type="protein sequence ID" value="CAW28123.1"/>
    <property type="molecule type" value="Genomic_DNA"/>
</dbReference>
<dbReference type="RefSeq" id="WP_003119172.1">
    <property type="nucleotide sequence ID" value="NC_011770.1"/>
</dbReference>
<dbReference type="SMR" id="B7VAU6"/>
<dbReference type="KEGG" id="pag:PLES_33961"/>
<dbReference type="HOGENOM" id="CLU_013175_0_0_6"/>
<dbReference type="UniPathway" id="UPA00051">
    <property type="reaction ID" value="UER00082"/>
</dbReference>
<dbReference type="GO" id="GO:0003871">
    <property type="term" value="F:5-methyltetrahydropteroyltriglutamate-homocysteine S-methyltransferase activity"/>
    <property type="evidence" value="ECO:0007669"/>
    <property type="project" value="UniProtKB-UniRule"/>
</dbReference>
<dbReference type="GO" id="GO:0008270">
    <property type="term" value="F:zinc ion binding"/>
    <property type="evidence" value="ECO:0007669"/>
    <property type="project" value="InterPro"/>
</dbReference>
<dbReference type="GO" id="GO:0009086">
    <property type="term" value="P:methionine biosynthetic process"/>
    <property type="evidence" value="ECO:0007669"/>
    <property type="project" value="UniProtKB-UniRule"/>
</dbReference>
<dbReference type="GO" id="GO:0032259">
    <property type="term" value="P:methylation"/>
    <property type="evidence" value="ECO:0007669"/>
    <property type="project" value="UniProtKB-KW"/>
</dbReference>
<dbReference type="CDD" id="cd03311">
    <property type="entry name" value="CIMS_C_terminal_like"/>
    <property type="match status" value="1"/>
</dbReference>
<dbReference type="CDD" id="cd03312">
    <property type="entry name" value="CIMS_N_terminal_like"/>
    <property type="match status" value="1"/>
</dbReference>
<dbReference type="FunFam" id="3.20.20.210:FF:000002">
    <property type="entry name" value="5-methyltetrahydropteroyltriglutamate--homocysteine methyltransferase"/>
    <property type="match status" value="1"/>
</dbReference>
<dbReference type="FunFam" id="3.20.20.210:FF:000003">
    <property type="entry name" value="5-methyltetrahydropteroyltriglutamate--homocysteine methyltransferase"/>
    <property type="match status" value="1"/>
</dbReference>
<dbReference type="Gene3D" id="3.20.20.210">
    <property type="match status" value="2"/>
</dbReference>
<dbReference type="HAMAP" id="MF_00172">
    <property type="entry name" value="Meth_synth"/>
    <property type="match status" value="1"/>
</dbReference>
<dbReference type="InterPro" id="IPR013215">
    <property type="entry name" value="Cbl-indep_Met_Synth_N"/>
</dbReference>
<dbReference type="InterPro" id="IPR006276">
    <property type="entry name" value="Cobalamin-indep_Met_synthase"/>
</dbReference>
<dbReference type="InterPro" id="IPR002629">
    <property type="entry name" value="Met_Synth_C/arc"/>
</dbReference>
<dbReference type="InterPro" id="IPR038071">
    <property type="entry name" value="UROD/MetE-like_sf"/>
</dbReference>
<dbReference type="NCBIfam" id="TIGR01371">
    <property type="entry name" value="met_syn_B12ind"/>
    <property type="match status" value="1"/>
</dbReference>
<dbReference type="NCBIfam" id="NF003556">
    <property type="entry name" value="PRK05222.1"/>
    <property type="match status" value="1"/>
</dbReference>
<dbReference type="PANTHER" id="PTHR30519">
    <property type="entry name" value="5-METHYLTETRAHYDROPTEROYLTRIGLUTAMATE--HOMOCYSTEINE METHYLTRANSFERASE"/>
    <property type="match status" value="1"/>
</dbReference>
<dbReference type="Pfam" id="PF08267">
    <property type="entry name" value="Meth_synt_1"/>
    <property type="match status" value="1"/>
</dbReference>
<dbReference type="Pfam" id="PF01717">
    <property type="entry name" value="Meth_synt_2"/>
    <property type="match status" value="1"/>
</dbReference>
<dbReference type="PIRSF" id="PIRSF000382">
    <property type="entry name" value="MeTrfase_B12_ind"/>
    <property type="match status" value="1"/>
</dbReference>
<dbReference type="SUPFAM" id="SSF51726">
    <property type="entry name" value="UROD/MetE-like"/>
    <property type="match status" value="2"/>
</dbReference>
<gene>
    <name evidence="1" type="primary">metE</name>
    <name type="ordered locus">PLES_33961</name>
</gene>
<organism>
    <name type="scientific">Pseudomonas aeruginosa (strain LESB58)</name>
    <dbReference type="NCBI Taxonomy" id="557722"/>
    <lineage>
        <taxon>Bacteria</taxon>
        <taxon>Pseudomonadati</taxon>
        <taxon>Pseudomonadota</taxon>
        <taxon>Gammaproteobacteria</taxon>
        <taxon>Pseudomonadales</taxon>
        <taxon>Pseudomonadaceae</taxon>
        <taxon>Pseudomonas</taxon>
    </lineage>
</organism>
<feature type="chain" id="PRO_1000191204" description="5-methyltetrahydropteroyltriglutamate--homocysteine methyltransferase">
    <location>
        <begin position="1"/>
        <end position="766"/>
    </location>
</feature>
<feature type="active site" description="Proton donor" evidence="1">
    <location>
        <position position="703"/>
    </location>
</feature>
<feature type="binding site" evidence="1">
    <location>
        <begin position="16"/>
        <end position="19"/>
    </location>
    <ligand>
        <name>5-methyltetrahydropteroyltri-L-glutamate</name>
        <dbReference type="ChEBI" id="CHEBI:58207"/>
    </ligand>
</feature>
<feature type="binding site" evidence="1">
    <location>
        <position position="119"/>
    </location>
    <ligand>
        <name>5-methyltetrahydropteroyltri-L-glutamate</name>
        <dbReference type="ChEBI" id="CHEBI:58207"/>
    </ligand>
</feature>
<feature type="binding site" evidence="1">
    <location>
        <begin position="440"/>
        <end position="442"/>
    </location>
    <ligand>
        <name>L-homocysteine</name>
        <dbReference type="ChEBI" id="CHEBI:58199"/>
    </ligand>
</feature>
<feature type="binding site" evidence="1">
    <location>
        <begin position="440"/>
        <end position="442"/>
    </location>
    <ligand>
        <name>L-methionine</name>
        <dbReference type="ChEBI" id="CHEBI:57844"/>
    </ligand>
</feature>
<feature type="binding site" evidence="1">
    <location>
        <position position="493"/>
    </location>
    <ligand>
        <name>L-homocysteine</name>
        <dbReference type="ChEBI" id="CHEBI:58199"/>
    </ligand>
</feature>
<feature type="binding site" evidence="1">
    <location>
        <position position="493"/>
    </location>
    <ligand>
        <name>L-methionine</name>
        <dbReference type="ChEBI" id="CHEBI:57844"/>
    </ligand>
</feature>
<feature type="binding site" evidence="1">
    <location>
        <begin position="524"/>
        <end position="525"/>
    </location>
    <ligand>
        <name>5-methyltetrahydropteroyltri-L-glutamate</name>
        <dbReference type="ChEBI" id="CHEBI:58207"/>
    </ligand>
</feature>
<feature type="binding site" evidence="1">
    <location>
        <position position="570"/>
    </location>
    <ligand>
        <name>5-methyltetrahydropteroyltri-L-glutamate</name>
        <dbReference type="ChEBI" id="CHEBI:58207"/>
    </ligand>
</feature>
<feature type="binding site" evidence="1">
    <location>
        <position position="608"/>
    </location>
    <ligand>
        <name>L-homocysteine</name>
        <dbReference type="ChEBI" id="CHEBI:58199"/>
    </ligand>
</feature>
<feature type="binding site" evidence="1">
    <location>
        <position position="608"/>
    </location>
    <ligand>
        <name>L-methionine</name>
        <dbReference type="ChEBI" id="CHEBI:57844"/>
    </ligand>
</feature>
<feature type="binding site" evidence="1">
    <location>
        <position position="614"/>
    </location>
    <ligand>
        <name>5-methyltetrahydropteroyltri-L-glutamate</name>
        <dbReference type="ChEBI" id="CHEBI:58207"/>
    </ligand>
</feature>
<feature type="binding site" evidence="1">
    <location>
        <position position="650"/>
    </location>
    <ligand>
        <name>Zn(2+)</name>
        <dbReference type="ChEBI" id="CHEBI:29105"/>
        <note>catalytic</note>
    </ligand>
</feature>
<feature type="binding site" evidence="1">
    <location>
        <position position="652"/>
    </location>
    <ligand>
        <name>Zn(2+)</name>
        <dbReference type="ChEBI" id="CHEBI:29105"/>
        <note>catalytic</note>
    </ligand>
</feature>
<feature type="binding site" evidence="1">
    <location>
        <position position="674"/>
    </location>
    <ligand>
        <name>Zn(2+)</name>
        <dbReference type="ChEBI" id="CHEBI:29105"/>
        <note>catalytic</note>
    </ligand>
</feature>
<feature type="binding site" evidence="1">
    <location>
        <position position="735"/>
    </location>
    <ligand>
        <name>Zn(2+)</name>
        <dbReference type="ChEBI" id="CHEBI:29105"/>
        <note>catalytic</note>
    </ligand>
</feature>
<accession>B7VAU6</accession>
<evidence type="ECO:0000255" key="1">
    <source>
        <dbReference type="HAMAP-Rule" id="MF_00172"/>
    </source>
</evidence>
<comment type="function">
    <text evidence="1">Catalyzes the transfer of a methyl group from 5-methyltetrahydrofolate to homocysteine resulting in methionine formation.</text>
</comment>
<comment type="catalytic activity">
    <reaction evidence="1">
        <text>5-methyltetrahydropteroyltri-L-glutamate + L-homocysteine = tetrahydropteroyltri-L-glutamate + L-methionine</text>
        <dbReference type="Rhea" id="RHEA:21196"/>
        <dbReference type="ChEBI" id="CHEBI:57844"/>
        <dbReference type="ChEBI" id="CHEBI:58140"/>
        <dbReference type="ChEBI" id="CHEBI:58199"/>
        <dbReference type="ChEBI" id="CHEBI:58207"/>
        <dbReference type="EC" id="2.1.1.14"/>
    </reaction>
</comment>
<comment type="cofactor">
    <cofactor evidence="1">
        <name>Zn(2+)</name>
        <dbReference type="ChEBI" id="CHEBI:29105"/>
    </cofactor>
    <text evidence="1">Binds 1 zinc ion per subunit.</text>
</comment>
<comment type="pathway">
    <text evidence="1">Amino-acid biosynthesis; L-methionine biosynthesis via de novo pathway; L-methionine from L-homocysteine (MetE route): step 1/1.</text>
</comment>
<comment type="similarity">
    <text evidence="1">Belongs to the vitamin-B12 independent methionine synthase family.</text>
</comment>
<sequence>MALAHTLGFPRIGRDRELKKAQEAFWKGELDEAGLRAVGRQLRAAHWQVQKDAGIQLLPVGDFAWYDQVLTHSLTFGVIPERFRAHGEAGPTLHTLFGMARGVSDDSCCGGAHAQEMTKWFDTNYHYLVPEFSADQQFQLSWEQLFEEVDEARALGHQVKPVLIGPLTYLWLGKGKGAEFDRLDLLDRLLPLYGQILRRLAGQGVEWVQIDEPILVLDLPQAWKNAFERAYNLLQSEPLKKLVATYFGGLEDNLGLAANLPVDGLHIDLVRAPEQYPSILDRLPAYKVVSLGLVNGRNVWRCDLEKALEVVRHARERLGERLWVAPSCSLLHSPVDLEREDGLDAELKSWLAFAVQKCREVAVLARAATEPEAAEVLAALEESRAVQASRASSPRIHKPAVQARLAAIKASDAQRRSPFAERIARQRAGLDLPAFPTTTIGSFPQTSSIRLARQSFKQGKLSEAEYIEAMHSEIRHAVQIQEQLGLDVLVHGEAERNDMVEYFAEQLDGYVFTRFGWVQSYGSRCVKPAVIYGDLSRPRAMTVEWIRYAQSLTDKVMKGMLTGPVTMLMWSFPREDVSREVQARQLALAIRDEVVDLEAAGIRIVQIDEAAFREGLPLRRNAWPHYLEWATEAFRLCASGVRDETQIHTHMCYSEFNDVIESIAAMDADVITIETSRSDMELLEAFEQFDYPNEIGPGVYDIHSPRVPSREEIVALLRKAARRIPAERLWVNPDCGLKTRAWPETEAALVNMVAAARELRGDLARG</sequence>
<name>METE_PSEA8</name>
<protein>
    <recommendedName>
        <fullName evidence="1">5-methyltetrahydropteroyltriglutamate--homocysteine methyltransferase</fullName>
        <ecNumber evidence="1">2.1.1.14</ecNumber>
    </recommendedName>
    <alternativeName>
        <fullName evidence="1">Cobalamin-independent methionine synthase</fullName>
    </alternativeName>
    <alternativeName>
        <fullName evidence="1">Methionine synthase, vitamin-B12 independent isozyme</fullName>
    </alternativeName>
</protein>
<proteinExistence type="inferred from homology"/>